<gene>
    <name evidence="1" type="primary">mobA</name>
    <name type="ordered locus">RPD_3494</name>
</gene>
<accession>Q133M2</accession>
<comment type="function">
    <text evidence="1">Transfers a GMP moiety from GTP to Mo-molybdopterin (Mo-MPT) cofactor (Moco or molybdenum cofactor) to form Mo-molybdopterin guanine dinucleotide (Mo-MGD) cofactor.</text>
</comment>
<comment type="catalytic activity">
    <reaction evidence="1">
        <text>Mo-molybdopterin + GTP + H(+) = Mo-molybdopterin guanine dinucleotide + diphosphate</text>
        <dbReference type="Rhea" id="RHEA:34243"/>
        <dbReference type="ChEBI" id="CHEBI:15378"/>
        <dbReference type="ChEBI" id="CHEBI:33019"/>
        <dbReference type="ChEBI" id="CHEBI:37565"/>
        <dbReference type="ChEBI" id="CHEBI:71302"/>
        <dbReference type="ChEBI" id="CHEBI:71310"/>
        <dbReference type="EC" id="2.7.7.77"/>
    </reaction>
</comment>
<comment type="cofactor">
    <cofactor evidence="1">
        <name>Mg(2+)</name>
        <dbReference type="ChEBI" id="CHEBI:18420"/>
    </cofactor>
</comment>
<comment type="subunit">
    <text evidence="1">Monomer.</text>
</comment>
<comment type="subcellular location">
    <subcellularLocation>
        <location evidence="1">Cytoplasm</location>
    </subcellularLocation>
</comment>
<comment type="domain">
    <text evidence="1">The N-terminal domain determines nucleotide recognition and specific binding, while the C-terminal domain determines the specific binding to the target protein.</text>
</comment>
<comment type="similarity">
    <text evidence="1">Belongs to the MobA family.</text>
</comment>
<sequence>MPMADHPATPAVVLAGGLAQRMGGGDKPLREIAGRSLLARVIDRLAPQCDTLALNANGDPARFAGFGLPVIADPVDGFPGPLAGVLAGLDWIAAHRPDAEWMLSAPADCPFLPSDLVVRLHQARLDQQADIAVAASAGRSHPVIALWPCRLQIDLRRALLADDIRKVDRFTARYPRAIVEWPVQPFDPFFNANTPEDVAEAERIALRDSR</sequence>
<protein>
    <recommendedName>
        <fullName evidence="1">Molybdenum cofactor guanylyltransferase</fullName>
        <shortName evidence="1">MoCo guanylyltransferase</shortName>
        <ecNumber evidence="1">2.7.7.77</ecNumber>
    </recommendedName>
    <alternativeName>
        <fullName evidence="1">GTP:molybdopterin guanylyltransferase</fullName>
    </alternativeName>
    <alternativeName>
        <fullName evidence="1">Mo-MPT guanylyltransferase</fullName>
    </alternativeName>
    <alternativeName>
        <fullName evidence="1">Molybdopterin guanylyltransferase</fullName>
    </alternativeName>
    <alternativeName>
        <fullName evidence="1">Molybdopterin-guanine dinucleotide synthase</fullName>
        <shortName evidence="1">MGD synthase</shortName>
    </alternativeName>
</protein>
<name>MOBA_RHOPS</name>
<reference key="1">
    <citation type="submission" date="2006-03" db="EMBL/GenBank/DDBJ databases">
        <title>Complete sequence of Rhodopseudomonas palustris BisB5.</title>
        <authorList>
            <consortium name="US DOE Joint Genome Institute"/>
            <person name="Copeland A."/>
            <person name="Lucas S."/>
            <person name="Lapidus A."/>
            <person name="Barry K."/>
            <person name="Detter J.C."/>
            <person name="Glavina del Rio T."/>
            <person name="Hammon N."/>
            <person name="Israni S."/>
            <person name="Dalin E."/>
            <person name="Tice H."/>
            <person name="Pitluck S."/>
            <person name="Chain P."/>
            <person name="Malfatti S."/>
            <person name="Shin M."/>
            <person name="Vergez L."/>
            <person name="Schmutz J."/>
            <person name="Larimer F."/>
            <person name="Land M."/>
            <person name="Hauser L."/>
            <person name="Pelletier D.A."/>
            <person name="Kyrpides N."/>
            <person name="Lykidis A."/>
            <person name="Oda Y."/>
            <person name="Harwood C.S."/>
            <person name="Richardson P."/>
        </authorList>
    </citation>
    <scope>NUCLEOTIDE SEQUENCE [LARGE SCALE GENOMIC DNA]</scope>
    <source>
        <strain>BisB5</strain>
    </source>
</reference>
<proteinExistence type="inferred from homology"/>
<keyword id="KW-0963">Cytoplasm</keyword>
<keyword id="KW-0342">GTP-binding</keyword>
<keyword id="KW-0460">Magnesium</keyword>
<keyword id="KW-0479">Metal-binding</keyword>
<keyword id="KW-0501">Molybdenum cofactor biosynthesis</keyword>
<keyword id="KW-0547">Nucleotide-binding</keyword>
<keyword id="KW-0808">Transferase</keyword>
<feature type="chain" id="PRO_1000019142" description="Molybdenum cofactor guanylyltransferase">
    <location>
        <begin position="1"/>
        <end position="210"/>
    </location>
</feature>
<feature type="binding site" evidence="1">
    <location>
        <begin position="14"/>
        <end position="16"/>
    </location>
    <ligand>
        <name>GTP</name>
        <dbReference type="ChEBI" id="CHEBI:37565"/>
    </ligand>
</feature>
<feature type="binding site" evidence="1">
    <location>
        <position position="27"/>
    </location>
    <ligand>
        <name>GTP</name>
        <dbReference type="ChEBI" id="CHEBI:37565"/>
    </ligand>
</feature>
<feature type="binding site" evidence="1">
    <location>
        <position position="55"/>
    </location>
    <ligand>
        <name>GTP</name>
        <dbReference type="ChEBI" id="CHEBI:37565"/>
    </ligand>
</feature>
<feature type="binding site" evidence="1">
    <location>
        <position position="73"/>
    </location>
    <ligand>
        <name>GTP</name>
        <dbReference type="ChEBI" id="CHEBI:37565"/>
    </ligand>
</feature>
<feature type="binding site" evidence="1">
    <location>
        <position position="108"/>
    </location>
    <ligand>
        <name>GTP</name>
        <dbReference type="ChEBI" id="CHEBI:37565"/>
    </ligand>
</feature>
<feature type="binding site" evidence="1">
    <location>
        <position position="108"/>
    </location>
    <ligand>
        <name>Mg(2+)</name>
        <dbReference type="ChEBI" id="CHEBI:18420"/>
    </ligand>
</feature>
<evidence type="ECO:0000255" key="1">
    <source>
        <dbReference type="HAMAP-Rule" id="MF_00316"/>
    </source>
</evidence>
<organism>
    <name type="scientific">Rhodopseudomonas palustris (strain BisB5)</name>
    <dbReference type="NCBI Taxonomy" id="316057"/>
    <lineage>
        <taxon>Bacteria</taxon>
        <taxon>Pseudomonadati</taxon>
        <taxon>Pseudomonadota</taxon>
        <taxon>Alphaproteobacteria</taxon>
        <taxon>Hyphomicrobiales</taxon>
        <taxon>Nitrobacteraceae</taxon>
        <taxon>Rhodopseudomonas</taxon>
    </lineage>
</organism>
<dbReference type="EC" id="2.7.7.77" evidence="1"/>
<dbReference type="EMBL" id="CP000283">
    <property type="protein sequence ID" value="ABE40717.1"/>
    <property type="molecule type" value="Genomic_DNA"/>
</dbReference>
<dbReference type="SMR" id="Q133M2"/>
<dbReference type="STRING" id="316057.RPD_3494"/>
<dbReference type="KEGG" id="rpd:RPD_3494"/>
<dbReference type="eggNOG" id="COG0746">
    <property type="taxonomic scope" value="Bacteria"/>
</dbReference>
<dbReference type="HOGENOM" id="CLU_055597_5_0_5"/>
<dbReference type="BioCyc" id="RPAL316057:RPD_RS17565-MONOMER"/>
<dbReference type="Proteomes" id="UP000001818">
    <property type="component" value="Chromosome"/>
</dbReference>
<dbReference type="GO" id="GO:0005737">
    <property type="term" value="C:cytoplasm"/>
    <property type="evidence" value="ECO:0007669"/>
    <property type="project" value="UniProtKB-SubCell"/>
</dbReference>
<dbReference type="GO" id="GO:0005525">
    <property type="term" value="F:GTP binding"/>
    <property type="evidence" value="ECO:0007669"/>
    <property type="project" value="UniProtKB-UniRule"/>
</dbReference>
<dbReference type="GO" id="GO:0046872">
    <property type="term" value="F:metal ion binding"/>
    <property type="evidence" value="ECO:0007669"/>
    <property type="project" value="UniProtKB-KW"/>
</dbReference>
<dbReference type="GO" id="GO:0061603">
    <property type="term" value="F:molybdenum cofactor guanylyltransferase activity"/>
    <property type="evidence" value="ECO:0007669"/>
    <property type="project" value="UniProtKB-EC"/>
</dbReference>
<dbReference type="GO" id="GO:1902758">
    <property type="term" value="P:bis(molybdopterin guanine dinucleotide)molybdenum biosynthetic process"/>
    <property type="evidence" value="ECO:0007669"/>
    <property type="project" value="TreeGrafter"/>
</dbReference>
<dbReference type="CDD" id="cd02503">
    <property type="entry name" value="MobA"/>
    <property type="match status" value="1"/>
</dbReference>
<dbReference type="Gene3D" id="3.90.550.10">
    <property type="entry name" value="Spore Coat Polysaccharide Biosynthesis Protein SpsA, Chain A"/>
    <property type="match status" value="1"/>
</dbReference>
<dbReference type="HAMAP" id="MF_00316">
    <property type="entry name" value="MobA"/>
    <property type="match status" value="1"/>
</dbReference>
<dbReference type="InterPro" id="IPR025877">
    <property type="entry name" value="MobA-like_NTP_Trfase"/>
</dbReference>
<dbReference type="InterPro" id="IPR013482">
    <property type="entry name" value="Molybde_CF_guanTrfase"/>
</dbReference>
<dbReference type="InterPro" id="IPR029044">
    <property type="entry name" value="Nucleotide-diphossugar_trans"/>
</dbReference>
<dbReference type="NCBIfam" id="TIGR02665">
    <property type="entry name" value="molyb_mobA"/>
    <property type="match status" value="1"/>
</dbReference>
<dbReference type="PANTHER" id="PTHR19136">
    <property type="entry name" value="MOLYBDENUM COFACTOR GUANYLYLTRANSFERASE"/>
    <property type="match status" value="1"/>
</dbReference>
<dbReference type="PANTHER" id="PTHR19136:SF81">
    <property type="entry name" value="MOLYBDENUM COFACTOR GUANYLYLTRANSFERASE"/>
    <property type="match status" value="1"/>
</dbReference>
<dbReference type="Pfam" id="PF12804">
    <property type="entry name" value="NTP_transf_3"/>
    <property type="match status" value="1"/>
</dbReference>
<dbReference type="SUPFAM" id="SSF53448">
    <property type="entry name" value="Nucleotide-diphospho-sugar transferases"/>
    <property type="match status" value="1"/>
</dbReference>